<sequence length="379" mass="42877">MINMRKSHPLLKIINHSLIDLPTPSNISVWWNFGSLLGVCLGLQILTGLFLAMHYTSDTLTAFSSVTHICRDVNYGWIIRYLHANGASMFFICLFLHVGRGMYYGSYNYLETWNIGVILLFTVMATAFMGYVLPWGQMSFWGATVITNLLSAIPYVGTSLVEWIWGGFSVDKATLTRFFAFHFILPFIITALVIVHLLFLHETGSNNPTGLNSDADKIPFHPYYTIKDILGFIIMFLFLMILVLFSPDMLGDPDNYTPANPLNTPPHIKPEWYFLFAYAILRSIPNKLGGVLALILSILILILLPMLHTSAQRSLMFRPISQCLFWILVADLFTLTWIGGQPVEHPFIIIGQLASILYFLIILVMMPLAGILENKIMKI</sequence>
<protein>
    <recommendedName>
        <fullName>Cytochrome b</fullName>
    </recommendedName>
    <alternativeName>
        <fullName>Complex III subunit 3</fullName>
    </alternativeName>
    <alternativeName>
        <fullName>Complex III subunit III</fullName>
    </alternativeName>
    <alternativeName>
        <fullName>Cytochrome b-c1 complex subunit 3</fullName>
    </alternativeName>
    <alternativeName>
        <fullName>Ubiquinol-cytochrome-c reductase complex cytochrome b subunit</fullName>
    </alternativeName>
</protein>
<gene>
    <name type="primary">MT-CYB</name>
    <name type="synonym">COB</name>
    <name type="synonym">CYTB</name>
    <name type="synonym">MTCYB</name>
</gene>
<name>CYB_EOSFC</name>
<organism>
    <name type="scientific">Eospalax fontanierii cansus</name>
    <name type="common">Gansu zokor</name>
    <name type="synonym">Eospalax cansus</name>
    <dbReference type="NCBI Taxonomy" id="146133"/>
    <lineage>
        <taxon>Eukaryota</taxon>
        <taxon>Metazoa</taxon>
        <taxon>Chordata</taxon>
        <taxon>Craniata</taxon>
        <taxon>Vertebrata</taxon>
        <taxon>Euteleostomi</taxon>
        <taxon>Mammalia</taxon>
        <taxon>Eutheria</taxon>
        <taxon>Euarchontoglires</taxon>
        <taxon>Glires</taxon>
        <taxon>Rodentia</taxon>
        <taxon>Myomorpha</taxon>
        <taxon>Muroidea</taxon>
        <taxon>Spalacidae</taxon>
        <taxon>Myospalacinae</taxon>
        <taxon>Eospalax</taxon>
    </lineage>
</organism>
<evidence type="ECO:0000250" key="1"/>
<evidence type="ECO:0000250" key="2">
    <source>
        <dbReference type="UniProtKB" id="P00157"/>
    </source>
</evidence>
<evidence type="ECO:0000255" key="3">
    <source>
        <dbReference type="PROSITE-ProRule" id="PRU00967"/>
    </source>
</evidence>
<evidence type="ECO:0000255" key="4">
    <source>
        <dbReference type="PROSITE-ProRule" id="PRU00968"/>
    </source>
</evidence>
<accession>Q9G0W6</accession>
<geneLocation type="mitochondrion"/>
<feature type="chain" id="PRO_0000255052" description="Cytochrome b">
    <location>
        <begin position="1"/>
        <end position="379"/>
    </location>
</feature>
<feature type="transmembrane region" description="Helical" evidence="2">
    <location>
        <begin position="33"/>
        <end position="53"/>
    </location>
</feature>
<feature type="transmembrane region" description="Helical" evidence="2">
    <location>
        <begin position="77"/>
        <end position="98"/>
    </location>
</feature>
<feature type="transmembrane region" description="Helical" evidence="2">
    <location>
        <begin position="113"/>
        <end position="133"/>
    </location>
</feature>
<feature type="transmembrane region" description="Helical" evidence="2">
    <location>
        <begin position="178"/>
        <end position="198"/>
    </location>
</feature>
<feature type="transmembrane region" description="Helical" evidence="2">
    <location>
        <begin position="226"/>
        <end position="246"/>
    </location>
</feature>
<feature type="transmembrane region" description="Helical" evidence="2">
    <location>
        <begin position="288"/>
        <end position="308"/>
    </location>
</feature>
<feature type="transmembrane region" description="Helical" evidence="2">
    <location>
        <begin position="320"/>
        <end position="340"/>
    </location>
</feature>
<feature type="transmembrane region" description="Helical" evidence="2">
    <location>
        <begin position="347"/>
        <end position="367"/>
    </location>
</feature>
<feature type="binding site" description="axial binding residue" evidence="2">
    <location>
        <position position="83"/>
    </location>
    <ligand>
        <name>heme b</name>
        <dbReference type="ChEBI" id="CHEBI:60344"/>
        <label>b562</label>
    </ligand>
    <ligandPart>
        <name>Fe</name>
        <dbReference type="ChEBI" id="CHEBI:18248"/>
    </ligandPart>
</feature>
<feature type="binding site" description="axial binding residue" evidence="2">
    <location>
        <position position="97"/>
    </location>
    <ligand>
        <name>heme b</name>
        <dbReference type="ChEBI" id="CHEBI:60344"/>
        <label>b566</label>
    </ligand>
    <ligandPart>
        <name>Fe</name>
        <dbReference type="ChEBI" id="CHEBI:18248"/>
    </ligandPart>
</feature>
<feature type="binding site" description="axial binding residue" evidence="2">
    <location>
        <position position="182"/>
    </location>
    <ligand>
        <name>heme b</name>
        <dbReference type="ChEBI" id="CHEBI:60344"/>
        <label>b562</label>
    </ligand>
    <ligandPart>
        <name>Fe</name>
        <dbReference type="ChEBI" id="CHEBI:18248"/>
    </ligandPart>
</feature>
<feature type="binding site" description="axial binding residue" evidence="2">
    <location>
        <position position="196"/>
    </location>
    <ligand>
        <name>heme b</name>
        <dbReference type="ChEBI" id="CHEBI:60344"/>
        <label>b566</label>
    </ligand>
    <ligandPart>
        <name>Fe</name>
        <dbReference type="ChEBI" id="CHEBI:18248"/>
    </ligandPart>
</feature>
<feature type="binding site" evidence="2">
    <location>
        <position position="201"/>
    </location>
    <ligand>
        <name>a ubiquinone</name>
        <dbReference type="ChEBI" id="CHEBI:16389"/>
    </ligand>
</feature>
<proteinExistence type="inferred from homology"/>
<keyword id="KW-0249">Electron transport</keyword>
<keyword id="KW-0349">Heme</keyword>
<keyword id="KW-0408">Iron</keyword>
<keyword id="KW-0472">Membrane</keyword>
<keyword id="KW-0479">Metal-binding</keyword>
<keyword id="KW-0496">Mitochondrion</keyword>
<keyword id="KW-0999">Mitochondrion inner membrane</keyword>
<keyword id="KW-0679">Respiratory chain</keyword>
<keyword id="KW-0812">Transmembrane</keyword>
<keyword id="KW-1133">Transmembrane helix</keyword>
<keyword id="KW-0813">Transport</keyword>
<keyword id="KW-0830">Ubiquinone</keyword>
<dbReference type="EMBL" id="AF326260">
    <property type="protein sequence ID" value="AAG48712.1"/>
    <property type="molecule type" value="Genomic_DNA"/>
</dbReference>
<dbReference type="EMBL" id="AF326261">
    <property type="protein sequence ID" value="AAG48713.1"/>
    <property type="molecule type" value="Genomic_DNA"/>
</dbReference>
<dbReference type="EMBL" id="AF326262">
    <property type="protein sequence ID" value="AAG48714.1"/>
    <property type="molecule type" value="Genomic_DNA"/>
</dbReference>
<dbReference type="EMBL" id="AF326263">
    <property type="protein sequence ID" value="AAG48715.1"/>
    <property type="molecule type" value="Genomic_DNA"/>
</dbReference>
<dbReference type="SMR" id="Q9G0W6"/>
<dbReference type="GO" id="GO:0005743">
    <property type="term" value="C:mitochondrial inner membrane"/>
    <property type="evidence" value="ECO:0007669"/>
    <property type="project" value="UniProtKB-SubCell"/>
</dbReference>
<dbReference type="GO" id="GO:0045275">
    <property type="term" value="C:respiratory chain complex III"/>
    <property type="evidence" value="ECO:0007669"/>
    <property type="project" value="InterPro"/>
</dbReference>
<dbReference type="GO" id="GO:0046872">
    <property type="term" value="F:metal ion binding"/>
    <property type="evidence" value="ECO:0007669"/>
    <property type="project" value="UniProtKB-KW"/>
</dbReference>
<dbReference type="GO" id="GO:0008121">
    <property type="term" value="F:ubiquinol-cytochrome-c reductase activity"/>
    <property type="evidence" value="ECO:0007669"/>
    <property type="project" value="InterPro"/>
</dbReference>
<dbReference type="GO" id="GO:0006122">
    <property type="term" value="P:mitochondrial electron transport, ubiquinol to cytochrome c"/>
    <property type="evidence" value="ECO:0007669"/>
    <property type="project" value="TreeGrafter"/>
</dbReference>
<dbReference type="CDD" id="cd00290">
    <property type="entry name" value="cytochrome_b_C"/>
    <property type="match status" value="1"/>
</dbReference>
<dbReference type="CDD" id="cd00284">
    <property type="entry name" value="Cytochrome_b_N"/>
    <property type="match status" value="1"/>
</dbReference>
<dbReference type="FunFam" id="1.20.810.10:FF:000002">
    <property type="entry name" value="Cytochrome b"/>
    <property type="match status" value="1"/>
</dbReference>
<dbReference type="Gene3D" id="1.20.810.10">
    <property type="entry name" value="Cytochrome Bc1 Complex, Chain C"/>
    <property type="match status" value="1"/>
</dbReference>
<dbReference type="InterPro" id="IPR005798">
    <property type="entry name" value="Cyt_b/b6_C"/>
</dbReference>
<dbReference type="InterPro" id="IPR036150">
    <property type="entry name" value="Cyt_b/b6_C_sf"/>
</dbReference>
<dbReference type="InterPro" id="IPR005797">
    <property type="entry name" value="Cyt_b/b6_N"/>
</dbReference>
<dbReference type="InterPro" id="IPR027387">
    <property type="entry name" value="Cytb/b6-like_sf"/>
</dbReference>
<dbReference type="InterPro" id="IPR030689">
    <property type="entry name" value="Cytochrome_b"/>
</dbReference>
<dbReference type="InterPro" id="IPR048260">
    <property type="entry name" value="Cytochrome_b_C_euk/bac"/>
</dbReference>
<dbReference type="InterPro" id="IPR048259">
    <property type="entry name" value="Cytochrome_b_N_euk/bac"/>
</dbReference>
<dbReference type="InterPro" id="IPR016174">
    <property type="entry name" value="Di-haem_cyt_TM"/>
</dbReference>
<dbReference type="PANTHER" id="PTHR19271">
    <property type="entry name" value="CYTOCHROME B"/>
    <property type="match status" value="1"/>
</dbReference>
<dbReference type="PANTHER" id="PTHR19271:SF16">
    <property type="entry name" value="CYTOCHROME B"/>
    <property type="match status" value="1"/>
</dbReference>
<dbReference type="Pfam" id="PF00032">
    <property type="entry name" value="Cytochrom_B_C"/>
    <property type="match status" value="1"/>
</dbReference>
<dbReference type="Pfam" id="PF00033">
    <property type="entry name" value="Cytochrome_B"/>
    <property type="match status" value="1"/>
</dbReference>
<dbReference type="PIRSF" id="PIRSF038885">
    <property type="entry name" value="COB"/>
    <property type="match status" value="1"/>
</dbReference>
<dbReference type="SUPFAM" id="SSF81648">
    <property type="entry name" value="a domain/subunit of cytochrome bc1 complex (Ubiquinol-cytochrome c reductase)"/>
    <property type="match status" value="1"/>
</dbReference>
<dbReference type="SUPFAM" id="SSF81342">
    <property type="entry name" value="Transmembrane di-heme cytochromes"/>
    <property type="match status" value="1"/>
</dbReference>
<dbReference type="PROSITE" id="PS51003">
    <property type="entry name" value="CYTB_CTER"/>
    <property type="match status" value="1"/>
</dbReference>
<dbReference type="PROSITE" id="PS51002">
    <property type="entry name" value="CYTB_NTER"/>
    <property type="match status" value="1"/>
</dbReference>
<comment type="function">
    <text evidence="2">Component of the ubiquinol-cytochrome c reductase complex (complex III or cytochrome b-c1 complex) that is part of the mitochondrial respiratory chain. The b-c1 complex mediates electron transfer from ubiquinol to cytochrome c. Contributes to the generation of a proton gradient across the mitochondrial membrane that is then used for ATP synthesis.</text>
</comment>
<comment type="cofactor">
    <cofactor evidence="2">
        <name>heme b</name>
        <dbReference type="ChEBI" id="CHEBI:60344"/>
    </cofactor>
    <text evidence="2">Binds 2 heme b groups non-covalently.</text>
</comment>
<comment type="subunit">
    <text evidence="2">The cytochrome bc1 complex contains 11 subunits: 3 respiratory subunits (MT-CYB, CYC1 and UQCRFS1), 2 core proteins (UQCRC1 and UQCRC2) and 6 low-molecular weight proteins (UQCRH/QCR6, UQCRB/QCR7, UQCRQ/QCR8, UQCR10/QCR9, UQCR11/QCR10 and a cleavage product of UQCRFS1). This cytochrome bc1 complex then forms a dimer.</text>
</comment>
<comment type="subcellular location">
    <subcellularLocation>
        <location evidence="2">Mitochondrion inner membrane</location>
        <topology evidence="2">Multi-pass membrane protein</topology>
    </subcellularLocation>
</comment>
<comment type="miscellaneous">
    <text evidence="1">Heme 1 (or BL or b562) is low-potential and absorbs at about 562 nm, and heme 2 (or BH or b566) is high-potential and absorbs at about 566 nm.</text>
</comment>
<comment type="similarity">
    <text evidence="3 4">Belongs to the cytochrome b family.</text>
</comment>
<comment type="caution">
    <text evidence="2">The full-length protein contains only eight transmembrane helices, not nine as predicted by bioinformatics tools.</text>
</comment>
<reference key="1">
    <citation type="submission" date="2000-12" db="EMBL/GenBank/DDBJ databases">
        <title>Phylogeny and systematics of myospalacinae (rodentia) inferred from mitochondrial genes sequences.</title>
        <authorList>
            <person name="Zhou C.Q."/>
            <person name="Zhou K.Y."/>
            <person name="Wang Y.Q."/>
            <person name="Zhang S.L."/>
        </authorList>
    </citation>
    <scope>NUCLEOTIDE SEQUENCE [GENOMIC DNA]</scope>
</reference>